<organism>
    <name type="scientific">Hydrogenovibrio crunogenus (strain DSM 25203 / XCL-2)</name>
    <name type="common">Thiomicrospira crunogena</name>
    <dbReference type="NCBI Taxonomy" id="317025"/>
    <lineage>
        <taxon>Bacteria</taxon>
        <taxon>Pseudomonadati</taxon>
        <taxon>Pseudomonadota</taxon>
        <taxon>Gammaproteobacteria</taxon>
        <taxon>Thiotrichales</taxon>
        <taxon>Piscirickettsiaceae</taxon>
        <taxon>Hydrogenovibrio</taxon>
    </lineage>
</organism>
<keyword id="KW-0233">DNA recombination</keyword>
<keyword id="KW-0238">DNA-binding</keyword>
<keyword id="KW-0804">Transcription</keyword>
<keyword id="KW-0805">Transcription regulation</keyword>
<keyword id="KW-0810">Translation regulation</keyword>
<accession>Q31F20</accession>
<reference key="1">
    <citation type="journal article" date="2006" name="PLoS Biol.">
        <title>The genome of deep-sea vent chemolithoautotroph Thiomicrospira crunogena XCL-2.</title>
        <authorList>
            <person name="Scott K.M."/>
            <person name="Sievert S.M."/>
            <person name="Abril F.N."/>
            <person name="Ball L.A."/>
            <person name="Barrett C.J."/>
            <person name="Blake R.A."/>
            <person name="Boller A.J."/>
            <person name="Chain P.S.G."/>
            <person name="Clark J.A."/>
            <person name="Davis C.R."/>
            <person name="Detter C."/>
            <person name="Do K.F."/>
            <person name="Dobrinski K.P."/>
            <person name="Faza B.I."/>
            <person name="Fitzpatrick K.A."/>
            <person name="Freyermuth S.K."/>
            <person name="Harmer T.L."/>
            <person name="Hauser L.J."/>
            <person name="Huegler M."/>
            <person name="Kerfeld C.A."/>
            <person name="Klotz M.G."/>
            <person name="Kong W.W."/>
            <person name="Land M."/>
            <person name="Lapidus A."/>
            <person name="Larimer F.W."/>
            <person name="Longo D.L."/>
            <person name="Lucas S."/>
            <person name="Malfatti S.A."/>
            <person name="Massey S.E."/>
            <person name="Martin D.D."/>
            <person name="McCuddin Z."/>
            <person name="Meyer F."/>
            <person name="Moore J.L."/>
            <person name="Ocampo L.H. Jr."/>
            <person name="Paul J.H."/>
            <person name="Paulsen I.T."/>
            <person name="Reep D.K."/>
            <person name="Ren Q."/>
            <person name="Ross R.L."/>
            <person name="Sato P.Y."/>
            <person name="Thomas P."/>
            <person name="Tinkham L.E."/>
            <person name="Zeruth G.T."/>
        </authorList>
    </citation>
    <scope>NUCLEOTIDE SEQUENCE [LARGE SCALE GENOMIC DNA]</scope>
    <source>
        <strain>DSM 25203 / XCL-2</strain>
    </source>
</reference>
<protein>
    <recommendedName>
        <fullName evidence="1">Integration host factor subunit alpha</fullName>
        <shortName evidence="1">IHF-alpha</shortName>
    </recommendedName>
</protein>
<comment type="function">
    <text evidence="1">This protein is one of the two subunits of integration host factor, a specific DNA-binding protein that functions in genetic recombination as well as in transcriptional and translational control.</text>
</comment>
<comment type="subunit">
    <text evidence="1">Heterodimer of an alpha and a beta chain.</text>
</comment>
<comment type="similarity">
    <text evidence="1">Belongs to the bacterial histone-like protein family.</text>
</comment>
<sequence>MALTKADIAETLSDKFGFNKRESKELVEQFYDEMSEVLVKGEQIKLSGFGNFELKDKSARPGRNPRTGEDVPISARRVVTFKPGQKLRAQIDNYGTA</sequence>
<evidence type="ECO:0000255" key="1">
    <source>
        <dbReference type="HAMAP-Rule" id="MF_00380"/>
    </source>
</evidence>
<dbReference type="EMBL" id="CP000109">
    <property type="protein sequence ID" value="ABB42253.1"/>
    <property type="molecule type" value="Genomic_DNA"/>
</dbReference>
<dbReference type="SMR" id="Q31F20"/>
<dbReference type="STRING" id="317025.Tcr_1661"/>
<dbReference type="KEGG" id="tcx:Tcr_1661"/>
<dbReference type="eggNOG" id="COG0776">
    <property type="taxonomic scope" value="Bacteria"/>
</dbReference>
<dbReference type="HOGENOM" id="CLU_105066_1_3_6"/>
<dbReference type="OrthoDB" id="9797747at2"/>
<dbReference type="GO" id="GO:0005829">
    <property type="term" value="C:cytosol"/>
    <property type="evidence" value="ECO:0007669"/>
    <property type="project" value="TreeGrafter"/>
</dbReference>
<dbReference type="GO" id="GO:0003677">
    <property type="term" value="F:DNA binding"/>
    <property type="evidence" value="ECO:0007669"/>
    <property type="project" value="UniProtKB-UniRule"/>
</dbReference>
<dbReference type="GO" id="GO:0030527">
    <property type="term" value="F:structural constituent of chromatin"/>
    <property type="evidence" value="ECO:0007669"/>
    <property type="project" value="InterPro"/>
</dbReference>
<dbReference type="GO" id="GO:0006310">
    <property type="term" value="P:DNA recombination"/>
    <property type="evidence" value="ECO:0007669"/>
    <property type="project" value="UniProtKB-UniRule"/>
</dbReference>
<dbReference type="GO" id="GO:0009893">
    <property type="term" value="P:positive regulation of metabolic process"/>
    <property type="evidence" value="ECO:0007669"/>
    <property type="project" value="UniProtKB-ARBA"/>
</dbReference>
<dbReference type="GO" id="GO:0006355">
    <property type="term" value="P:regulation of DNA-templated transcription"/>
    <property type="evidence" value="ECO:0007669"/>
    <property type="project" value="UniProtKB-UniRule"/>
</dbReference>
<dbReference type="GO" id="GO:0006417">
    <property type="term" value="P:regulation of translation"/>
    <property type="evidence" value="ECO:0007669"/>
    <property type="project" value="UniProtKB-UniRule"/>
</dbReference>
<dbReference type="CDD" id="cd13835">
    <property type="entry name" value="IHF_A"/>
    <property type="match status" value="1"/>
</dbReference>
<dbReference type="FunFam" id="4.10.520.10:FF:000002">
    <property type="entry name" value="Integration host factor subunit alpha"/>
    <property type="match status" value="1"/>
</dbReference>
<dbReference type="Gene3D" id="4.10.520.10">
    <property type="entry name" value="IHF-like DNA-binding proteins"/>
    <property type="match status" value="1"/>
</dbReference>
<dbReference type="HAMAP" id="MF_00380">
    <property type="entry name" value="IHF_alpha"/>
    <property type="match status" value="1"/>
</dbReference>
<dbReference type="InterPro" id="IPR000119">
    <property type="entry name" value="Hist_DNA-bd"/>
</dbReference>
<dbReference type="InterPro" id="IPR020816">
    <property type="entry name" value="Histone-like_DNA-bd_CS"/>
</dbReference>
<dbReference type="InterPro" id="IPR010992">
    <property type="entry name" value="IHF-like_DNA-bd_dom_sf"/>
</dbReference>
<dbReference type="InterPro" id="IPR005684">
    <property type="entry name" value="IHF_alpha"/>
</dbReference>
<dbReference type="NCBIfam" id="TIGR00987">
    <property type="entry name" value="himA"/>
    <property type="match status" value="1"/>
</dbReference>
<dbReference type="NCBIfam" id="NF001401">
    <property type="entry name" value="PRK00285.1"/>
    <property type="match status" value="1"/>
</dbReference>
<dbReference type="PANTHER" id="PTHR33175">
    <property type="entry name" value="DNA-BINDING PROTEIN HU"/>
    <property type="match status" value="1"/>
</dbReference>
<dbReference type="PANTHER" id="PTHR33175:SF2">
    <property type="entry name" value="INTEGRATION HOST FACTOR SUBUNIT ALPHA"/>
    <property type="match status" value="1"/>
</dbReference>
<dbReference type="Pfam" id="PF00216">
    <property type="entry name" value="Bac_DNA_binding"/>
    <property type="match status" value="1"/>
</dbReference>
<dbReference type="PRINTS" id="PR01727">
    <property type="entry name" value="DNABINDINGHU"/>
</dbReference>
<dbReference type="SMART" id="SM00411">
    <property type="entry name" value="BHL"/>
    <property type="match status" value="1"/>
</dbReference>
<dbReference type="SUPFAM" id="SSF47729">
    <property type="entry name" value="IHF-like DNA-binding proteins"/>
    <property type="match status" value="1"/>
</dbReference>
<dbReference type="PROSITE" id="PS00045">
    <property type="entry name" value="HISTONE_LIKE"/>
    <property type="match status" value="1"/>
</dbReference>
<proteinExistence type="inferred from homology"/>
<feature type="chain" id="PRO_0000277786" description="Integration host factor subunit alpha">
    <location>
        <begin position="1"/>
        <end position="97"/>
    </location>
</feature>
<name>IHFA_HYDCU</name>
<gene>
    <name evidence="1" type="primary">ihfA</name>
    <name evidence="1" type="synonym">himA</name>
    <name type="ordered locus">Tcr_1661</name>
</gene>